<gene>
    <name type="primary">cbbX</name>
</gene>
<accession>Q9SCC7</accession>
<evidence type="ECO:0000255" key="1"/>
<evidence type="ECO:0000305" key="2"/>
<keyword id="KW-0067">ATP-binding</keyword>
<keyword id="KW-0150">Chloroplast</keyword>
<keyword id="KW-0547">Nucleotide-binding</keyword>
<keyword id="KW-0934">Plastid</keyword>
<keyword id="KW-0809">Transit peptide</keyword>
<geneLocation type="nucleomorph"/>
<name>CBBX_GUITH</name>
<reference key="1">
    <citation type="journal article" date="2000" name="Mol. Biol. Evol.">
        <title>A nucleomorph-encoded CbbX and the phylogeny of RuBisCO regulators.</title>
        <authorList>
            <person name="Maier U.-G."/>
            <person name="Fraunholz M."/>
            <person name="Zauner S."/>
            <person name="Penny S."/>
            <person name="Douglas S."/>
        </authorList>
    </citation>
    <scope>NUCLEOTIDE SEQUENCE [GENOMIC DNA]</scope>
</reference>
<reference key="2">
    <citation type="journal article" date="2001" name="Nature">
        <title>The highly reduced genome of an enslaved algal nucleus.</title>
        <authorList>
            <person name="Douglas S.E."/>
            <person name="Zauner S."/>
            <person name="Fraunholz M."/>
            <person name="Beaton M."/>
            <person name="Penny S.L."/>
            <person name="Deng L.-T."/>
            <person name="Wu X."/>
            <person name="Reith M.E."/>
            <person name="Cavalier-Smith T."/>
            <person name="Maier U.-G."/>
        </authorList>
    </citation>
    <scope>NUCLEOTIDE SEQUENCE [LARGE SCALE GENOMIC DNA]</scope>
</reference>
<protein>
    <recommendedName>
        <fullName>Protein cbbX homolog, chloroplastic</fullName>
    </recommendedName>
</protein>
<sequence length="371" mass="42330">MIAFISNYITFKTNRTYKNNICQLHCQSLNDNDIEARKIKEEAERRKQQAERNRMQKQMKIDRLNAIPEDAEAGTVEEFMYKDGVKEILEKLDNDLVGLVPVKSRVREIAALLVVDKLRRNLGLDTSVPSLHMCFTGAPGTGKTTVAMRMGQILQRMGYCRSGHLVVATRDDLVGQYVGHTAPKTKEVIKKAMGGVLLIDEAYYLYNASNDRDYGQESIEILLNVMEENREDLVVVLAGYKDRMDKFFSFIPGMSSRVGNHIEFPNYEAEELLSIAKVMCRDLEYEMSKDAEPIFFEYIKKRMTMPYFSNARTVRNAVDRARMRAAIRLFNQATSGNSNGLVSKKQLMTLEKEDFVSVEELIARGDNAIVE</sequence>
<organism>
    <name type="scientific">Guillardia theta</name>
    <name type="common">Cryptophyte</name>
    <name type="synonym">Cryptomonas phi</name>
    <dbReference type="NCBI Taxonomy" id="55529"/>
    <lineage>
        <taxon>Eukaryota</taxon>
        <taxon>Cryptophyceae</taxon>
        <taxon>Pyrenomonadales</taxon>
        <taxon>Geminigeraceae</taxon>
        <taxon>Guillardia</taxon>
    </lineage>
</organism>
<dbReference type="EMBL" id="AJ251479">
    <property type="protein sequence ID" value="CAB65663.1"/>
    <property type="molecule type" value="Genomic_DNA"/>
</dbReference>
<dbReference type="EMBL" id="AJ010592">
    <property type="protein sequence ID" value="CAC27030.1"/>
    <property type="molecule type" value="Genomic_DNA"/>
</dbReference>
<dbReference type="PIR" id="A90109">
    <property type="entry name" value="A90109"/>
</dbReference>
<dbReference type="RefSeq" id="XP_001713246.1">
    <property type="nucleotide sequence ID" value="XM_001713194.1"/>
</dbReference>
<dbReference type="SMR" id="Q9SCC7"/>
<dbReference type="GeneID" id="857449"/>
<dbReference type="Proteomes" id="UP000242167">
    <property type="component" value="Chromosome 2"/>
</dbReference>
<dbReference type="GO" id="GO:0009507">
    <property type="term" value="C:chloroplast"/>
    <property type="evidence" value="ECO:0007669"/>
    <property type="project" value="UniProtKB-SubCell"/>
</dbReference>
<dbReference type="GO" id="GO:0005524">
    <property type="term" value="F:ATP binding"/>
    <property type="evidence" value="ECO:0007669"/>
    <property type="project" value="UniProtKB-KW"/>
</dbReference>
<dbReference type="GO" id="GO:0016887">
    <property type="term" value="F:ATP hydrolysis activity"/>
    <property type="evidence" value="ECO:0007669"/>
    <property type="project" value="InterPro"/>
</dbReference>
<dbReference type="CDD" id="cd00009">
    <property type="entry name" value="AAA"/>
    <property type="match status" value="1"/>
</dbReference>
<dbReference type="FunFam" id="3.40.50.300:FF:000216">
    <property type="entry name" value="Type VII secretion ATPase EccA"/>
    <property type="match status" value="1"/>
</dbReference>
<dbReference type="Gene3D" id="1.10.8.60">
    <property type="match status" value="1"/>
</dbReference>
<dbReference type="Gene3D" id="3.40.50.300">
    <property type="entry name" value="P-loop containing nucleotide triphosphate hydrolases"/>
    <property type="match status" value="1"/>
</dbReference>
<dbReference type="InterPro" id="IPR003593">
    <property type="entry name" value="AAA+_ATPase"/>
</dbReference>
<dbReference type="InterPro" id="IPR041627">
    <property type="entry name" value="AAA_lid_6"/>
</dbReference>
<dbReference type="InterPro" id="IPR003959">
    <property type="entry name" value="ATPase_AAA_core"/>
</dbReference>
<dbReference type="InterPro" id="IPR000470">
    <property type="entry name" value="CbxX/CfqX_mono"/>
</dbReference>
<dbReference type="InterPro" id="IPR000641">
    <property type="entry name" value="CbxX/CfxQ"/>
</dbReference>
<dbReference type="InterPro" id="IPR050773">
    <property type="entry name" value="CbxX/CfxQ_RuBisCO_ESX"/>
</dbReference>
<dbReference type="InterPro" id="IPR027417">
    <property type="entry name" value="P-loop_NTPase"/>
</dbReference>
<dbReference type="PANTHER" id="PTHR43392">
    <property type="entry name" value="AAA-TYPE ATPASE FAMILY PROTEIN / ANKYRIN REPEAT FAMILY PROTEIN"/>
    <property type="match status" value="1"/>
</dbReference>
<dbReference type="PANTHER" id="PTHR43392:SF2">
    <property type="entry name" value="AAA-TYPE ATPASE FAMILY PROTEIN _ ANKYRIN REPEAT FAMILY PROTEIN"/>
    <property type="match status" value="1"/>
</dbReference>
<dbReference type="Pfam" id="PF00004">
    <property type="entry name" value="AAA"/>
    <property type="match status" value="1"/>
</dbReference>
<dbReference type="Pfam" id="PF17866">
    <property type="entry name" value="AAA_lid_6"/>
    <property type="match status" value="1"/>
</dbReference>
<dbReference type="PRINTS" id="PR00819">
    <property type="entry name" value="CBXCFQXSUPER"/>
</dbReference>
<dbReference type="PRINTS" id="PR00820">
    <property type="entry name" value="CBXXCFQX"/>
</dbReference>
<dbReference type="SMART" id="SM00382">
    <property type="entry name" value="AAA"/>
    <property type="match status" value="1"/>
</dbReference>
<dbReference type="SUPFAM" id="SSF52540">
    <property type="entry name" value="P-loop containing nucleoside triphosphate hydrolases"/>
    <property type="match status" value="1"/>
</dbReference>
<feature type="transit peptide" description="Chloroplast" evidence="1">
    <location>
        <begin position="1"/>
        <end position="54"/>
    </location>
</feature>
<feature type="chain" id="PRO_0000004776" description="Protein cbbX homolog, chloroplastic">
    <location>
        <begin position="55"/>
        <end position="371"/>
    </location>
</feature>
<feature type="binding site" evidence="1">
    <location>
        <begin position="137"/>
        <end position="144"/>
    </location>
    <ligand>
        <name>ATP</name>
        <dbReference type="ChEBI" id="CHEBI:30616"/>
    </ligand>
</feature>
<comment type="function">
    <text>Seems to be necessary for the expression of RuBisCO.</text>
</comment>
<comment type="subcellular location">
    <subcellularLocation>
        <location>Plastid</location>
        <location>Chloroplast</location>
    </subcellularLocation>
</comment>
<comment type="similarity">
    <text evidence="2">Belongs to the CbxX/CfxQ family.</text>
</comment>
<proteinExistence type="inferred from homology"/>